<sequence>MKFFIFTCLLAVVLAKHEMDQGSSSEESINVSQQKFKQVKKVAIHPSKEDICSTFCEEAVRNIKEVESAEVPTENKISQFYQKWKFLQYLQALHQGQIVMNPWDQGKTRAYPFIPTVNTEQLSISEESTEVPTEESTEVFTKKTELTEEEKDHQKFLNKIYQYYQTFLWPEYLKTVYQYQKTMTPWNHIKRYF</sequence>
<proteinExistence type="evidence at protein level"/>
<organism>
    <name type="scientific">Camelus dromedarius</name>
    <name type="common">Dromedary</name>
    <name type="synonym">Arabian camel</name>
    <dbReference type="NCBI Taxonomy" id="9838"/>
    <lineage>
        <taxon>Eukaryota</taxon>
        <taxon>Metazoa</taxon>
        <taxon>Chordata</taxon>
        <taxon>Craniata</taxon>
        <taxon>Vertebrata</taxon>
        <taxon>Euteleostomi</taxon>
        <taxon>Mammalia</taxon>
        <taxon>Eutheria</taxon>
        <taxon>Laurasiatheria</taxon>
        <taxon>Artiodactyla</taxon>
        <taxon>Tylopoda</taxon>
        <taxon>Camelidae</taxon>
        <taxon>Camelus</taxon>
    </lineage>
</organism>
<feature type="signal peptide">
    <location>
        <begin position="1"/>
        <end position="15"/>
    </location>
</feature>
<feature type="chain" id="PRO_0000004462" description="Alpha-S2-casein">
    <location>
        <begin position="16"/>
        <end position="193"/>
    </location>
</feature>
<feature type="modified residue" description="Phosphoserine" evidence="4">
    <location>
        <position position="23"/>
    </location>
</feature>
<feature type="modified residue" description="Phosphoserine" evidence="4">
    <location>
        <position position="24"/>
    </location>
</feature>
<feature type="modified residue" description="Phosphoserine" evidence="4">
    <location>
        <position position="25"/>
    </location>
</feature>
<feature type="modified residue" description="Phosphoserine" evidence="1">
    <location>
        <position position="28"/>
    </location>
</feature>
<feature type="modified residue" description="Phosphoserine" evidence="4">
    <location>
        <position position="47"/>
    </location>
</feature>
<feature type="modified residue" description="Phosphoserine" evidence="4">
    <location>
        <position position="68"/>
    </location>
</feature>
<feature type="modified residue" description="Phosphoserine" evidence="4">
    <location>
        <position position="123"/>
    </location>
</feature>
<feature type="modified residue" description="Phosphoserine" evidence="4">
    <location>
        <position position="125"/>
    </location>
</feature>
<feature type="modified residue" description="Phosphoserine" evidence="4">
    <location>
        <position position="128"/>
    </location>
</feature>
<feature type="modified residue" description="Phosphoserine" evidence="4">
    <location>
        <position position="136"/>
    </location>
</feature>
<protein>
    <recommendedName>
        <fullName>Alpha-S2-casein</fullName>
    </recommendedName>
</protein>
<name>CASA2_CAMDR</name>
<gene>
    <name type="primary">CSN1S2</name>
</gene>
<reference key="1">
    <citation type="journal article" date="1998" name="J. Dairy Res.">
        <title>Sequence analysis of Camelus dromedarius milk caseins.</title>
        <authorList>
            <person name="Kappeler S."/>
            <person name="Farah Z."/>
            <person name="Puhan Z."/>
        </authorList>
    </citation>
    <scope>NUCLEOTIDE SEQUENCE [MRNA]</scope>
    <scope>PARTIAL PROTEIN SEQUENCE</scope>
    <scope>PHOSPHORYLATION AT SER-23; SER-24; SER-25; SER-47; SER-68; SER-123; SER-125; SER-128 AND SER-136</scope>
    <scope>MASS SPECTROMETRY</scope>
    <source>
        <strain>Somali</strain>
        <tissue>Udder</tissue>
    </source>
</reference>
<keyword id="KW-0903">Direct protein sequencing</keyword>
<keyword id="KW-0494">Milk protein</keyword>
<keyword id="KW-0597">Phosphoprotein</keyword>
<keyword id="KW-0964">Secreted</keyword>
<keyword id="KW-0732">Signal</keyword>
<accession>O97944</accession>
<dbReference type="EMBL" id="AJ012629">
    <property type="protein sequence ID" value="CAA10078.1"/>
    <property type="molecule type" value="mRNA"/>
</dbReference>
<dbReference type="RefSeq" id="NP_001290490.1">
    <property type="nucleotide sequence ID" value="NM_001303561.1"/>
</dbReference>
<dbReference type="SMR" id="O97944"/>
<dbReference type="iPTMnet" id="O97944"/>
<dbReference type="GeneID" id="105090951"/>
<dbReference type="KEGG" id="cdk:105090951"/>
<dbReference type="OrthoDB" id="9564348at2759"/>
<dbReference type="GO" id="GO:0005615">
    <property type="term" value="C:extracellular space"/>
    <property type="evidence" value="ECO:0007669"/>
    <property type="project" value="TreeGrafter"/>
</dbReference>
<dbReference type="GO" id="GO:0042803">
    <property type="term" value="F:protein homodimerization activity"/>
    <property type="evidence" value="ECO:0007669"/>
    <property type="project" value="TreeGrafter"/>
</dbReference>
<dbReference type="GO" id="GO:0035375">
    <property type="term" value="F:zymogen binding"/>
    <property type="evidence" value="ECO:0007669"/>
    <property type="project" value="TreeGrafter"/>
</dbReference>
<dbReference type="InterPro" id="IPR011175">
    <property type="entry name" value="Alpha-s2_casein"/>
</dbReference>
<dbReference type="InterPro" id="IPR001588">
    <property type="entry name" value="Casein"/>
</dbReference>
<dbReference type="PANTHER" id="PTHR16656">
    <property type="entry name" value="ALPHA-S2-CASEIN-LIKE B"/>
    <property type="match status" value="1"/>
</dbReference>
<dbReference type="PANTHER" id="PTHR16656:SF5">
    <property type="entry name" value="ALPHA-S2-CASEIN-LIKE B"/>
    <property type="match status" value="1"/>
</dbReference>
<dbReference type="Pfam" id="PF00363">
    <property type="entry name" value="Casein"/>
    <property type="match status" value="1"/>
</dbReference>
<dbReference type="PIRSF" id="PIRSF002371">
    <property type="entry name" value="Alpha-s2-casein"/>
    <property type="match status" value="1"/>
</dbReference>
<evidence type="ECO:0000250" key="1">
    <source>
        <dbReference type="UniProtKB" id="P02663"/>
    </source>
</evidence>
<evidence type="ECO:0000269" key="2">
    <source>
    </source>
</evidence>
<evidence type="ECO:0000305" key="3"/>
<evidence type="ECO:0000305" key="4">
    <source>
    </source>
</evidence>
<comment type="function">
    <text>Important role in the capacity of milk to transport calcium phosphate.</text>
</comment>
<comment type="subcellular location">
    <subcellularLocation>
        <location>Secreted</location>
    </subcellularLocation>
</comment>
<comment type="tissue specificity">
    <text>Mammary gland specific. Secreted in milk.</text>
</comment>
<comment type="mass spectrometry">
    <text>with 9 phosphate groups.</text>
</comment>
<comment type="similarity">
    <text evidence="3">Belongs to the alpha-casein family.</text>
</comment>